<name>LOLA_PSEU2</name>
<accession>Q9Z3U0</accession>
<accession>Q4ZRL2</accession>
<reference key="1">
    <citation type="submission" date="1998-09" db="EMBL/GenBank/DDBJ databases">
        <title>A transposon insertion in the ftsK/spoIIIE gene impairs in planta growth and lesion forming abilities in Pseudomonas syringae pv. syringae B728a.</title>
        <authorList>
            <person name="Kisncherf T.G."/>
            <person name="Hirano S.S."/>
            <person name="Willis D.K."/>
        </authorList>
    </citation>
    <scope>NUCLEOTIDE SEQUENCE [GENOMIC DNA]</scope>
</reference>
<reference key="2">
    <citation type="journal article" date="2005" name="Proc. Natl. Acad. Sci. U.S.A.">
        <title>Comparison of the complete genome sequences of Pseudomonas syringae pv. syringae B728a and pv. tomato DC3000.</title>
        <authorList>
            <person name="Feil H."/>
            <person name="Feil W.S."/>
            <person name="Chain P."/>
            <person name="Larimer F."/>
            <person name="Dibartolo G."/>
            <person name="Copeland A."/>
            <person name="Lykidis A."/>
            <person name="Trong S."/>
            <person name="Nolan M."/>
            <person name="Goltsman E."/>
            <person name="Thiel J."/>
            <person name="Malfatti S."/>
            <person name="Loper J.E."/>
            <person name="Lapidus A."/>
            <person name="Detter J.C."/>
            <person name="Land M."/>
            <person name="Richardson P.M."/>
            <person name="Kyrpides N.C."/>
            <person name="Ivanova N."/>
            <person name="Lindow S.E."/>
        </authorList>
    </citation>
    <scope>NUCLEOTIDE SEQUENCE [LARGE SCALE GENOMIC DNA]</scope>
    <source>
        <strain>B728a</strain>
    </source>
</reference>
<protein>
    <recommendedName>
        <fullName>Outer-membrane lipoprotein carrier protein</fullName>
    </recommendedName>
</protein>
<gene>
    <name type="primary">lolA</name>
    <name type="ordered locus">Psyr_3178</name>
</gene>
<feature type="signal peptide" evidence="2">
    <location>
        <begin position="1"/>
        <end position="23"/>
    </location>
</feature>
<feature type="chain" id="PRO_0000018272" description="Outer-membrane lipoprotein carrier protein">
    <location>
        <begin position="24"/>
        <end position="207"/>
    </location>
</feature>
<proteinExistence type="inferred from homology"/>
<dbReference type="EMBL" id="AF095845">
    <property type="protein sequence ID" value="AAC98299.1"/>
    <property type="molecule type" value="Genomic_DNA"/>
</dbReference>
<dbReference type="EMBL" id="CP000075">
    <property type="protein sequence ID" value="AAY38210.1"/>
    <property type="molecule type" value="Genomic_DNA"/>
</dbReference>
<dbReference type="RefSeq" id="WP_003405079.1">
    <property type="nucleotide sequence ID" value="NC_007005.1"/>
</dbReference>
<dbReference type="RefSeq" id="YP_236248.1">
    <property type="nucleotide sequence ID" value="NC_007005.1"/>
</dbReference>
<dbReference type="SMR" id="Q9Z3U0"/>
<dbReference type="STRING" id="205918.Psyr_3178"/>
<dbReference type="KEGG" id="psb:Psyr_3178"/>
<dbReference type="PATRIC" id="fig|205918.7.peg.3243"/>
<dbReference type="eggNOG" id="COG2834">
    <property type="taxonomic scope" value="Bacteria"/>
</dbReference>
<dbReference type="HOGENOM" id="CLU_087560_0_0_6"/>
<dbReference type="OrthoDB" id="9787361at2"/>
<dbReference type="Proteomes" id="UP000000426">
    <property type="component" value="Chromosome"/>
</dbReference>
<dbReference type="GO" id="GO:0030288">
    <property type="term" value="C:outer membrane-bounded periplasmic space"/>
    <property type="evidence" value="ECO:0007669"/>
    <property type="project" value="TreeGrafter"/>
</dbReference>
<dbReference type="GO" id="GO:0044874">
    <property type="term" value="P:lipoprotein localization to outer membrane"/>
    <property type="evidence" value="ECO:0007669"/>
    <property type="project" value="UniProtKB-UniRule"/>
</dbReference>
<dbReference type="GO" id="GO:0042953">
    <property type="term" value="P:lipoprotein transport"/>
    <property type="evidence" value="ECO:0007669"/>
    <property type="project" value="InterPro"/>
</dbReference>
<dbReference type="CDD" id="cd16325">
    <property type="entry name" value="LolA"/>
    <property type="match status" value="1"/>
</dbReference>
<dbReference type="Gene3D" id="2.50.20.10">
    <property type="entry name" value="Lipoprotein localisation LolA/LolB/LppX"/>
    <property type="match status" value="1"/>
</dbReference>
<dbReference type="HAMAP" id="MF_00240">
    <property type="entry name" value="LolA"/>
    <property type="match status" value="1"/>
</dbReference>
<dbReference type="InterPro" id="IPR029046">
    <property type="entry name" value="LolA/LolB/LppX"/>
</dbReference>
<dbReference type="InterPro" id="IPR004564">
    <property type="entry name" value="OM_lipoprot_carrier_LolA-like"/>
</dbReference>
<dbReference type="InterPro" id="IPR018323">
    <property type="entry name" value="OM_lipoprot_carrier_LolA_Pbac"/>
</dbReference>
<dbReference type="NCBIfam" id="TIGR00547">
    <property type="entry name" value="lolA"/>
    <property type="match status" value="1"/>
</dbReference>
<dbReference type="PANTHER" id="PTHR35869">
    <property type="entry name" value="OUTER-MEMBRANE LIPOPROTEIN CARRIER PROTEIN"/>
    <property type="match status" value="1"/>
</dbReference>
<dbReference type="PANTHER" id="PTHR35869:SF1">
    <property type="entry name" value="OUTER-MEMBRANE LIPOPROTEIN CARRIER PROTEIN"/>
    <property type="match status" value="1"/>
</dbReference>
<dbReference type="Pfam" id="PF03548">
    <property type="entry name" value="LolA"/>
    <property type="match status" value="1"/>
</dbReference>
<dbReference type="SUPFAM" id="SSF89392">
    <property type="entry name" value="Prokaryotic lipoproteins and lipoprotein localization factors"/>
    <property type="match status" value="1"/>
</dbReference>
<sequence>MRLIRMLLATALTFSMIPAHADSKDVARLTQLLEKSQTLTARFSQLTLDGGGTQLQETTGEMALQRPGLFNWHTDAPQEQLMVSDGKKVSLWDPDLEQVTIKKLDQRLTQTPALLLSGDVSKISESFDITAKEAGGVIDFTLKPKTKDTLFDSLRLSFRNGIINDMQLIDSVGQRTNILFTGVKANESIAASKFQFQIPKGADVIQE</sequence>
<keyword id="KW-0143">Chaperone</keyword>
<keyword id="KW-0574">Periplasm</keyword>
<keyword id="KW-0653">Protein transport</keyword>
<keyword id="KW-0732">Signal</keyword>
<keyword id="KW-0813">Transport</keyword>
<evidence type="ECO:0000250" key="1"/>
<evidence type="ECO:0000255" key="2"/>
<evidence type="ECO:0000305" key="3"/>
<comment type="function">
    <text evidence="1">Participates in the translocation of lipoproteins from the inner membrane to the outer membrane. Only forms a complex with a lipoprotein if the residue after the N-terminal Cys is not an aspartate (The Asp acts as a targeting signal to indicate that the lipoprotein should stay in the inner membrane) (By similarity).</text>
</comment>
<comment type="subunit">
    <text evidence="1">Monomer.</text>
</comment>
<comment type="subcellular location">
    <subcellularLocation>
        <location evidence="1">Periplasm</location>
    </subcellularLocation>
</comment>
<comment type="similarity">
    <text evidence="3">Belongs to the LolA family.</text>
</comment>
<organism>
    <name type="scientific">Pseudomonas syringae pv. syringae (strain B728a)</name>
    <dbReference type="NCBI Taxonomy" id="205918"/>
    <lineage>
        <taxon>Bacteria</taxon>
        <taxon>Pseudomonadati</taxon>
        <taxon>Pseudomonadota</taxon>
        <taxon>Gammaproteobacteria</taxon>
        <taxon>Pseudomonadales</taxon>
        <taxon>Pseudomonadaceae</taxon>
        <taxon>Pseudomonas</taxon>
        <taxon>Pseudomonas syringae</taxon>
    </lineage>
</organism>